<feature type="chain" id="PRO_1000052577" description="Large ribosomal subunit protein uL22">
    <location>
        <begin position="1"/>
        <end position="110"/>
    </location>
</feature>
<proteinExistence type="inferred from homology"/>
<sequence length="110" mass="12148">METIAKHRYARTSAQKARLVADLIRGKKVAQALEILTFTNKKAAALVKKVLESAIANAEHNDGADIDDLKVAKIFVDEGPSMKRVMPRAKGRADRILKRTSHITVVVSDR</sequence>
<accession>A5UDU2</accession>
<evidence type="ECO:0000255" key="1">
    <source>
        <dbReference type="HAMAP-Rule" id="MF_01331"/>
    </source>
</evidence>
<evidence type="ECO:0000305" key="2"/>
<protein>
    <recommendedName>
        <fullName evidence="1">Large ribosomal subunit protein uL22</fullName>
    </recommendedName>
    <alternativeName>
        <fullName evidence="2">50S ribosomal protein L22</fullName>
    </alternativeName>
</protein>
<comment type="function">
    <text evidence="1">This protein binds specifically to 23S rRNA; its binding is stimulated by other ribosomal proteins, e.g. L4, L17, and L20. It is important during the early stages of 50S assembly. It makes multiple contacts with different domains of the 23S rRNA in the assembled 50S subunit and ribosome (By similarity).</text>
</comment>
<comment type="function">
    <text evidence="1">The globular domain of the protein is located near the polypeptide exit tunnel on the outside of the subunit, while an extended beta-hairpin is found that lines the wall of the exit tunnel in the center of the 70S ribosome.</text>
</comment>
<comment type="subunit">
    <text evidence="1">Part of the 50S ribosomal subunit.</text>
</comment>
<comment type="similarity">
    <text evidence="1">Belongs to the universal ribosomal protein uL22 family.</text>
</comment>
<reference key="1">
    <citation type="journal article" date="2007" name="Genome Biol.">
        <title>Characterization and modeling of the Haemophilus influenzae core and supragenomes based on the complete genomic sequences of Rd and 12 clinical nontypeable strains.</title>
        <authorList>
            <person name="Hogg J.S."/>
            <person name="Hu F.Z."/>
            <person name="Janto B."/>
            <person name="Boissy R."/>
            <person name="Hayes J."/>
            <person name="Keefe R."/>
            <person name="Post J.C."/>
            <person name="Ehrlich G.D."/>
        </authorList>
    </citation>
    <scope>NUCLEOTIDE SEQUENCE [LARGE SCALE GENOMIC DNA]</scope>
    <source>
        <strain>PittEE</strain>
    </source>
</reference>
<keyword id="KW-0687">Ribonucleoprotein</keyword>
<keyword id="KW-0689">Ribosomal protein</keyword>
<keyword id="KW-0694">RNA-binding</keyword>
<keyword id="KW-0699">rRNA-binding</keyword>
<dbReference type="EMBL" id="CP000671">
    <property type="protein sequence ID" value="ABQ98943.1"/>
    <property type="molecule type" value="Genomic_DNA"/>
</dbReference>
<dbReference type="SMR" id="A5UDU2"/>
<dbReference type="KEGG" id="hip:CGSHiEE_08150"/>
<dbReference type="HOGENOM" id="CLU_083987_3_3_6"/>
<dbReference type="GO" id="GO:0022625">
    <property type="term" value="C:cytosolic large ribosomal subunit"/>
    <property type="evidence" value="ECO:0007669"/>
    <property type="project" value="TreeGrafter"/>
</dbReference>
<dbReference type="GO" id="GO:0019843">
    <property type="term" value="F:rRNA binding"/>
    <property type="evidence" value="ECO:0007669"/>
    <property type="project" value="UniProtKB-UniRule"/>
</dbReference>
<dbReference type="GO" id="GO:0003735">
    <property type="term" value="F:structural constituent of ribosome"/>
    <property type="evidence" value="ECO:0007669"/>
    <property type="project" value="InterPro"/>
</dbReference>
<dbReference type="GO" id="GO:0006412">
    <property type="term" value="P:translation"/>
    <property type="evidence" value="ECO:0007669"/>
    <property type="project" value="UniProtKB-UniRule"/>
</dbReference>
<dbReference type="CDD" id="cd00336">
    <property type="entry name" value="Ribosomal_L22"/>
    <property type="match status" value="1"/>
</dbReference>
<dbReference type="FunFam" id="3.90.470.10:FF:000001">
    <property type="entry name" value="50S ribosomal protein L22"/>
    <property type="match status" value="1"/>
</dbReference>
<dbReference type="Gene3D" id="3.90.470.10">
    <property type="entry name" value="Ribosomal protein L22/L17"/>
    <property type="match status" value="1"/>
</dbReference>
<dbReference type="HAMAP" id="MF_01331_B">
    <property type="entry name" value="Ribosomal_uL22_B"/>
    <property type="match status" value="1"/>
</dbReference>
<dbReference type="InterPro" id="IPR001063">
    <property type="entry name" value="Ribosomal_uL22"/>
</dbReference>
<dbReference type="InterPro" id="IPR005727">
    <property type="entry name" value="Ribosomal_uL22_bac/chlpt-type"/>
</dbReference>
<dbReference type="InterPro" id="IPR047867">
    <property type="entry name" value="Ribosomal_uL22_bac/org-type"/>
</dbReference>
<dbReference type="InterPro" id="IPR018260">
    <property type="entry name" value="Ribosomal_uL22_CS"/>
</dbReference>
<dbReference type="InterPro" id="IPR036394">
    <property type="entry name" value="Ribosomal_uL22_sf"/>
</dbReference>
<dbReference type="NCBIfam" id="TIGR01044">
    <property type="entry name" value="rplV_bact"/>
    <property type="match status" value="1"/>
</dbReference>
<dbReference type="PANTHER" id="PTHR13501">
    <property type="entry name" value="CHLOROPLAST 50S RIBOSOMAL PROTEIN L22-RELATED"/>
    <property type="match status" value="1"/>
</dbReference>
<dbReference type="PANTHER" id="PTHR13501:SF8">
    <property type="entry name" value="LARGE RIBOSOMAL SUBUNIT PROTEIN UL22M"/>
    <property type="match status" value="1"/>
</dbReference>
<dbReference type="Pfam" id="PF00237">
    <property type="entry name" value="Ribosomal_L22"/>
    <property type="match status" value="1"/>
</dbReference>
<dbReference type="SUPFAM" id="SSF54843">
    <property type="entry name" value="Ribosomal protein L22"/>
    <property type="match status" value="1"/>
</dbReference>
<dbReference type="PROSITE" id="PS00464">
    <property type="entry name" value="RIBOSOMAL_L22"/>
    <property type="match status" value="1"/>
</dbReference>
<organism>
    <name type="scientific">Haemophilus influenzae (strain PittEE)</name>
    <dbReference type="NCBI Taxonomy" id="374930"/>
    <lineage>
        <taxon>Bacteria</taxon>
        <taxon>Pseudomonadati</taxon>
        <taxon>Pseudomonadota</taxon>
        <taxon>Gammaproteobacteria</taxon>
        <taxon>Pasteurellales</taxon>
        <taxon>Pasteurellaceae</taxon>
        <taxon>Haemophilus</taxon>
    </lineage>
</organism>
<name>RL22_HAEIE</name>
<gene>
    <name evidence="1" type="primary">rplV</name>
    <name type="ordered locus">CGSHiEE_08150</name>
</gene>